<dbReference type="EMBL" id="CP000948">
    <property type="protein sequence ID" value="ACB04012.1"/>
    <property type="molecule type" value="Genomic_DNA"/>
</dbReference>
<dbReference type="RefSeq" id="WP_001276008.1">
    <property type="nucleotide sequence ID" value="NC_010473.1"/>
</dbReference>
<dbReference type="SMR" id="B1XEJ6"/>
<dbReference type="GeneID" id="93779091"/>
<dbReference type="KEGG" id="ecd:ECDH10B_3084"/>
<dbReference type="HOGENOM" id="CLU_116623_3_0_6"/>
<dbReference type="GO" id="GO:0032153">
    <property type="term" value="C:cell division site"/>
    <property type="evidence" value="ECO:0007669"/>
    <property type="project" value="TreeGrafter"/>
</dbReference>
<dbReference type="GO" id="GO:0030428">
    <property type="term" value="C:cell septum"/>
    <property type="evidence" value="ECO:0007669"/>
    <property type="project" value="TreeGrafter"/>
</dbReference>
<dbReference type="GO" id="GO:0005829">
    <property type="term" value="C:cytosol"/>
    <property type="evidence" value="ECO:0007669"/>
    <property type="project" value="TreeGrafter"/>
</dbReference>
<dbReference type="GO" id="GO:0005886">
    <property type="term" value="C:plasma membrane"/>
    <property type="evidence" value="ECO:0007669"/>
    <property type="project" value="UniProtKB-UniRule"/>
</dbReference>
<dbReference type="GO" id="GO:0000917">
    <property type="term" value="P:division septum assembly"/>
    <property type="evidence" value="ECO:0007669"/>
    <property type="project" value="UniProtKB-KW"/>
</dbReference>
<dbReference type="GO" id="GO:0043093">
    <property type="term" value="P:FtsZ-dependent cytokinesis"/>
    <property type="evidence" value="ECO:0007669"/>
    <property type="project" value="TreeGrafter"/>
</dbReference>
<dbReference type="GO" id="GO:0000921">
    <property type="term" value="P:septin ring assembly"/>
    <property type="evidence" value="ECO:0007669"/>
    <property type="project" value="TreeGrafter"/>
</dbReference>
<dbReference type="FunFam" id="1.20.5.50:FF:000001">
    <property type="entry name" value="Cell division protein ZapA"/>
    <property type="match status" value="1"/>
</dbReference>
<dbReference type="FunFam" id="3.30.160.880:FF:000001">
    <property type="entry name" value="Cell division protein ZapA"/>
    <property type="match status" value="1"/>
</dbReference>
<dbReference type="Gene3D" id="1.20.5.50">
    <property type="match status" value="1"/>
</dbReference>
<dbReference type="Gene3D" id="3.30.160.880">
    <property type="entry name" value="Cell division protein ZapA protomer, N-terminal domain"/>
    <property type="match status" value="1"/>
</dbReference>
<dbReference type="HAMAP" id="MF_02012">
    <property type="entry name" value="ZapA_type1"/>
    <property type="match status" value="1"/>
</dbReference>
<dbReference type="InterPro" id="IPR007838">
    <property type="entry name" value="Cell_div_ZapA-like"/>
</dbReference>
<dbReference type="InterPro" id="IPR036192">
    <property type="entry name" value="Cell_div_ZapA-like_sf"/>
</dbReference>
<dbReference type="InterPro" id="IPR023771">
    <property type="entry name" value="Cell_div_ZapA_eubact"/>
</dbReference>
<dbReference type="InterPro" id="IPR042233">
    <property type="entry name" value="Cell_div_ZapA_N"/>
</dbReference>
<dbReference type="NCBIfam" id="NF008209">
    <property type="entry name" value="PRK10972.1"/>
    <property type="match status" value="1"/>
</dbReference>
<dbReference type="PANTHER" id="PTHR34981">
    <property type="entry name" value="CELL DIVISION PROTEIN ZAPA"/>
    <property type="match status" value="1"/>
</dbReference>
<dbReference type="PANTHER" id="PTHR34981:SF1">
    <property type="entry name" value="CELL DIVISION PROTEIN ZAPA"/>
    <property type="match status" value="1"/>
</dbReference>
<dbReference type="Pfam" id="PF05164">
    <property type="entry name" value="ZapA"/>
    <property type="match status" value="1"/>
</dbReference>
<dbReference type="SUPFAM" id="SSF102829">
    <property type="entry name" value="Cell division protein ZapA-like"/>
    <property type="match status" value="1"/>
</dbReference>
<accession>B1XEJ6</accession>
<organism>
    <name type="scientific">Escherichia coli (strain K12 / DH10B)</name>
    <dbReference type="NCBI Taxonomy" id="316385"/>
    <lineage>
        <taxon>Bacteria</taxon>
        <taxon>Pseudomonadati</taxon>
        <taxon>Pseudomonadota</taxon>
        <taxon>Gammaproteobacteria</taxon>
        <taxon>Enterobacterales</taxon>
        <taxon>Enterobacteriaceae</taxon>
        <taxon>Escherichia</taxon>
    </lineage>
</organism>
<gene>
    <name evidence="1" type="primary">zapA</name>
    <name type="ordered locus">ECDH10B_3084</name>
</gene>
<reference key="1">
    <citation type="journal article" date="2008" name="J. Bacteriol.">
        <title>The complete genome sequence of Escherichia coli DH10B: insights into the biology of a laboratory workhorse.</title>
        <authorList>
            <person name="Durfee T."/>
            <person name="Nelson R."/>
            <person name="Baldwin S."/>
            <person name="Plunkett G. III"/>
            <person name="Burland V."/>
            <person name="Mau B."/>
            <person name="Petrosino J.F."/>
            <person name="Qin X."/>
            <person name="Muzny D.M."/>
            <person name="Ayele M."/>
            <person name="Gibbs R.A."/>
            <person name="Csorgo B."/>
            <person name="Posfai G."/>
            <person name="Weinstock G.M."/>
            <person name="Blattner F.R."/>
        </authorList>
    </citation>
    <scope>NUCLEOTIDE SEQUENCE [LARGE SCALE GENOMIC DNA]</scope>
    <source>
        <strain>K12 / DH10B</strain>
    </source>
</reference>
<protein>
    <recommendedName>
        <fullName evidence="1">Cell division protein ZapA</fullName>
    </recommendedName>
    <alternativeName>
        <fullName evidence="1">Z ring-associated protein ZapA</fullName>
    </alternativeName>
</protein>
<sequence>MSAQPVDIQIFGRSLRVNCPPDQRDALNQAADDLNQRLQDLKERTRVTNTEQLVFIAALNISYELAQEKAKTRDYAASMEQRIRMLQQTIEQALLEQGRITEKTNQNFE</sequence>
<keyword id="KW-0131">Cell cycle</keyword>
<keyword id="KW-0132">Cell division</keyword>
<keyword id="KW-0175">Coiled coil</keyword>
<keyword id="KW-0963">Cytoplasm</keyword>
<keyword id="KW-0717">Septation</keyword>
<feature type="chain" id="PRO_0000345644" description="Cell division protein ZapA">
    <location>
        <begin position="1"/>
        <end position="109"/>
    </location>
</feature>
<feature type="coiled-coil region" evidence="1">
    <location>
        <begin position="21"/>
        <end position="99"/>
    </location>
</feature>
<evidence type="ECO:0000255" key="1">
    <source>
        <dbReference type="HAMAP-Rule" id="MF_02012"/>
    </source>
</evidence>
<name>ZAPA_ECODH</name>
<comment type="function">
    <text evidence="1">Activator of cell division through the inhibition of FtsZ GTPase activity, therefore promoting FtsZ assembly into bundles of protofilaments necessary for the formation of the division Z ring. It is recruited early at mid-cell but it is not essential for cell division.</text>
</comment>
<comment type="subunit">
    <text evidence="1">Homodimer. Interacts with FtsZ.</text>
</comment>
<comment type="subcellular location">
    <subcellularLocation>
        <location evidence="1">Cytoplasm</location>
    </subcellularLocation>
    <text evidence="1">Localizes at mid-cell.</text>
</comment>
<comment type="similarity">
    <text evidence="1">Belongs to the ZapA family. Type 1 subfamily.</text>
</comment>
<proteinExistence type="inferred from homology"/>